<evidence type="ECO:0000255" key="1">
    <source>
        <dbReference type="HAMAP-Rule" id="MF_00754"/>
    </source>
</evidence>
<sequence>MRSKVEILPSTLIFHELIGLEIKVSNSTNPSLIGIRGRVINETKNMLVVENSESRELKIPKADSEFVFRIPAELSEKGRRSDIFVKIQGNLLLSQPENRIKNIKKLRKWG</sequence>
<name>RNP1_METMA</name>
<protein>
    <recommendedName>
        <fullName evidence="1">Ribonuclease P protein component 1</fullName>
        <shortName evidence="1">RNase P component 1</shortName>
        <ecNumber evidence="1">3.1.26.5</ecNumber>
    </recommendedName>
    <alternativeName>
        <fullName evidence="1">Rpp29</fullName>
    </alternativeName>
</protein>
<gene>
    <name evidence="1" type="primary">rnp1</name>
    <name type="ordered locus">MM_2132</name>
</gene>
<comment type="function">
    <text evidence="1">Part of ribonuclease P, a protein complex that generates mature tRNA molecules by cleaving their 5'-ends.</text>
</comment>
<comment type="catalytic activity">
    <reaction evidence="1">
        <text>Endonucleolytic cleavage of RNA, removing 5'-extranucleotides from tRNA precursor.</text>
        <dbReference type="EC" id="3.1.26.5"/>
    </reaction>
</comment>
<comment type="subunit">
    <text evidence="1">Consists of a catalytic RNA component and at least 4-5 protein subunits.</text>
</comment>
<comment type="subcellular location">
    <subcellularLocation>
        <location evidence="1">Cytoplasm</location>
    </subcellularLocation>
</comment>
<comment type="similarity">
    <text evidence="1">Belongs to the eukaryotic/archaeal RNase P protein component 1 family.</text>
</comment>
<dbReference type="EC" id="3.1.26.5" evidence="1"/>
<dbReference type="EMBL" id="AE008384">
    <property type="protein sequence ID" value="AAM31828.1"/>
    <property type="molecule type" value="Genomic_DNA"/>
</dbReference>
<dbReference type="RefSeq" id="WP_011034063.1">
    <property type="nucleotide sequence ID" value="NC_003901.1"/>
</dbReference>
<dbReference type="SMR" id="Q8PV42"/>
<dbReference type="KEGG" id="mma:MM_2132"/>
<dbReference type="PATRIC" id="fig|192952.21.peg.2446"/>
<dbReference type="eggNOG" id="arCOG00784">
    <property type="taxonomic scope" value="Archaea"/>
</dbReference>
<dbReference type="HOGENOM" id="CLU_107020_2_0_2"/>
<dbReference type="Proteomes" id="UP000000595">
    <property type="component" value="Chromosome"/>
</dbReference>
<dbReference type="GO" id="GO:0005737">
    <property type="term" value="C:cytoplasm"/>
    <property type="evidence" value="ECO:0007669"/>
    <property type="project" value="UniProtKB-SubCell"/>
</dbReference>
<dbReference type="GO" id="GO:0030677">
    <property type="term" value="C:ribonuclease P complex"/>
    <property type="evidence" value="ECO:0007669"/>
    <property type="project" value="UniProtKB-UniRule"/>
</dbReference>
<dbReference type="GO" id="GO:0004526">
    <property type="term" value="F:ribonuclease P activity"/>
    <property type="evidence" value="ECO:0007669"/>
    <property type="project" value="UniProtKB-UniRule"/>
</dbReference>
<dbReference type="GO" id="GO:0003723">
    <property type="term" value="F:RNA binding"/>
    <property type="evidence" value="ECO:0007669"/>
    <property type="project" value="InterPro"/>
</dbReference>
<dbReference type="GO" id="GO:0001682">
    <property type="term" value="P:tRNA 5'-leader removal"/>
    <property type="evidence" value="ECO:0007669"/>
    <property type="project" value="UniProtKB-UniRule"/>
</dbReference>
<dbReference type="Gene3D" id="2.30.30.210">
    <property type="entry name" value="Ribonuclease P/MRP, subunit p29"/>
    <property type="match status" value="1"/>
</dbReference>
<dbReference type="HAMAP" id="MF_00754">
    <property type="entry name" value="RNase_P_1"/>
    <property type="match status" value="1"/>
</dbReference>
<dbReference type="InterPro" id="IPR036980">
    <property type="entry name" value="RNase_P/MRP_Rpp29_sf"/>
</dbReference>
<dbReference type="InterPro" id="IPR023538">
    <property type="entry name" value="RNP1"/>
</dbReference>
<dbReference type="InterPro" id="IPR023534">
    <property type="entry name" value="Rof/RNase_P-like"/>
</dbReference>
<dbReference type="InterPro" id="IPR002730">
    <property type="entry name" value="Rpp29/RNP1"/>
</dbReference>
<dbReference type="NCBIfam" id="NF046110">
    <property type="entry name" value="RNaseP1Mthb"/>
    <property type="match status" value="1"/>
</dbReference>
<dbReference type="Pfam" id="PF01868">
    <property type="entry name" value="RNase_P-MRP_p29"/>
    <property type="match status" value="1"/>
</dbReference>
<dbReference type="SMART" id="SM00538">
    <property type="entry name" value="POP4"/>
    <property type="match status" value="1"/>
</dbReference>
<dbReference type="SUPFAM" id="SSF101744">
    <property type="entry name" value="Rof/RNase P subunit-like"/>
    <property type="match status" value="1"/>
</dbReference>
<feature type="chain" id="PRO_0000128431" description="Ribonuclease P protein component 1">
    <location>
        <begin position="1"/>
        <end position="110"/>
    </location>
</feature>
<keyword id="KW-0963">Cytoplasm</keyword>
<keyword id="KW-0255">Endonuclease</keyword>
<keyword id="KW-0378">Hydrolase</keyword>
<keyword id="KW-0540">Nuclease</keyword>
<keyword id="KW-0819">tRNA processing</keyword>
<organism>
    <name type="scientific">Methanosarcina mazei (strain ATCC BAA-159 / DSM 3647 / Goe1 / Go1 / JCM 11833 / OCM 88)</name>
    <name type="common">Methanosarcina frisia</name>
    <dbReference type="NCBI Taxonomy" id="192952"/>
    <lineage>
        <taxon>Archaea</taxon>
        <taxon>Methanobacteriati</taxon>
        <taxon>Methanobacteriota</taxon>
        <taxon>Stenosarchaea group</taxon>
        <taxon>Methanomicrobia</taxon>
        <taxon>Methanosarcinales</taxon>
        <taxon>Methanosarcinaceae</taxon>
        <taxon>Methanosarcina</taxon>
    </lineage>
</organism>
<proteinExistence type="inferred from homology"/>
<accession>Q8PV42</accession>
<reference key="1">
    <citation type="journal article" date="2002" name="J. Mol. Microbiol. Biotechnol.">
        <title>The genome of Methanosarcina mazei: evidence for lateral gene transfer between Bacteria and Archaea.</title>
        <authorList>
            <person name="Deppenmeier U."/>
            <person name="Johann A."/>
            <person name="Hartsch T."/>
            <person name="Merkl R."/>
            <person name="Schmitz R.A."/>
            <person name="Martinez-Arias R."/>
            <person name="Henne A."/>
            <person name="Wiezer A."/>
            <person name="Baeumer S."/>
            <person name="Jacobi C."/>
            <person name="Brueggemann H."/>
            <person name="Lienard T."/>
            <person name="Christmann A."/>
            <person name="Boemecke M."/>
            <person name="Steckel S."/>
            <person name="Bhattacharyya A."/>
            <person name="Lykidis A."/>
            <person name="Overbeek R."/>
            <person name="Klenk H.-P."/>
            <person name="Gunsalus R.P."/>
            <person name="Fritz H.-J."/>
            <person name="Gottschalk G."/>
        </authorList>
    </citation>
    <scope>NUCLEOTIDE SEQUENCE [LARGE SCALE GENOMIC DNA]</scope>
    <source>
        <strain>ATCC BAA-159 / DSM 3647 / Goe1 / Go1 / JCM 11833 / OCM 88</strain>
    </source>
</reference>